<accession>B4F2D0</accession>
<organism>
    <name type="scientific">Proteus mirabilis (strain HI4320)</name>
    <dbReference type="NCBI Taxonomy" id="529507"/>
    <lineage>
        <taxon>Bacteria</taxon>
        <taxon>Pseudomonadati</taxon>
        <taxon>Pseudomonadota</taxon>
        <taxon>Gammaproteobacteria</taxon>
        <taxon>Enterobacterales</taxon>
        <taxon>Morganellaceae</taxon>
        <taxon>Proteus</taxon>
    </lineage>
</organism>
<name>RRF_PROMH</name>
<protein>
    <recommendedName>
        <fullName evidence="1">Ribosome-recycling factor</fullName>
        <shortName evidence="1">RRF</shortName>
    </recommendedName>
    <alternativeName>
        <fullName evidence="1">Ribosome-releasing factor</fullName>
    </alternativeName>
</protein>
<keyword id="KW-0963">Cytoplasm</keyword>
<keyword id="KW-0648">Protein biosynthesis</keyword>
<keyword id="KW-1185">Reference proteome</keyword>
<sequence length="185" mass="20682">MINEIKKDAQERMDKSVEALKSQINKVRTGRASPNLLDGIVVEYYGAPTPLNQVANVVAEDGRTLAITVFDRTLAPAVEKAIMASDLGLNPSSAGAIIRVPLPPLTEERRKDLIKVVRGDAEQGRVSIRNIRRDANDKIKALLKDKEISEDDERRSQDEIQKLTDMFIKKIDEALTLKEAELMEF</sequence>
<reference key="1">
    <citation type="journal article" date="2008" name="J. Bacteriol.">
        <title>Complete genome sequence of uropathogenic Proteus mirabilis, a master of both adherence and motility.</title>
        <authorList>
            <person name="Pearson M.M."/>
            <person name="Sebaihia M."/>
            <person name="Churcher C."/>
            <person name="Quail M.A."/>
            <person name="Seshasayee A.S."/>
            <person name="Luscombe N.M."/>
            <person name="Abdellah Z."/>
            <person name="Arrosmith C."/>
            <person name="Atkin B."/>
            <person name="Chillingworth T."/>
            <person name="Hauser H."/>
            <person name="Jagels K."/>
            <person name="Moule S."/>
            <person name="Mungall K."/>
            <person name="Norbertczak H."/>
            <person name="Rabbinowitsch E."/>
            <person name="Walker D."/>
            <person name="Whithead S."/>
            <person name="Thomson N.R."/>
            <person name="Rather P.N."/>
            <person name="Parkhill J."/>
            <person name="Mobley H.L.T."/>
        </authorList>
    </citation>
    <scope>NUCLEOTIDE SEQUENCE [LARGE SCALE GENOMIC DNA]</scope>
    <source>
        <strain>HI4320</strain>
    </source>
</reference>
<evidence type="ECO:0000255" key="1">
    <source>
        <dbReference type="HAMAP-Rule" id="MF_00040"/>
    </source>
</evidence>
<gene>
    <name evidence="1" type="primary">frr</name>
    <name type="ordered locus">PMI2282</name>
</gene>
<proteinExistence type="inferred from homology"/>
<dbReference type="EMBL" id="AM942759">
    <property type="protein sequence ID" value="CAR44513.1"/>
    <property type="molecule type" value="Genomic_DNA"/>
</dbReference>
<dbReference type="RefSeq" id="WP_004245470.1">
    <property type="nucleotide sequence ID" value="NC_010554.1"/>
</dbReference>
<dbReference type="SMR" id="B4F2D0"/>
<dbReference type="EnsemblBacteria" id="CAR44513">
    <property type="protein sequence ID" value="CAR44513"/>
    <property type="gene ID" value="PMI2282"/>
</dbReference>
<dbReference type="GeneID" id="6801484"/>
<dbReference type="KEGG" id="pmr:PMI2282"/>
<dbReference type="eggNOG" id="COG0233">
    <property type="taxonomic scope" value="Bacteria"/>
</dbReference>
<dbReference type="HOGENOM" id="CLU_073981_2_1_6"/>
<dbReference type="Proteomes" id="UP000008319">
    <property type="component" value="Chromosome"/>
</dbReference>
<dbReference type="GO" id="GO:0005829">
    <property type="term" value="C:cytosol"/>
    <property type="evidence" value="ECO:0007669"/>
    <property type="project" value="GOC"/>
</dbReference>
<dbReference type="GO" id="GO:0043023">
    <property type="term" value="F:ribosomal large subunit binding"/>
    <property type="evidence" value="ECO:0007669"/>
    <property type="project" value="TreeGrafter"/>
</dbReference>
<dbReference type="GO" id="GO:0002184">
    <property type="term" value="P:cytoplasmic translational termination"/>
    <property type="evidence" value="ECO:0007669"/>
    <property type="project" value="TreeGrafter"/>
</dbReference>
<dbReference type="CDD" id="cd00520">
    <property type="entry name" value="RRF"/>
    <property type="match status" value="1"/>
</dbReference>
<dbReference type="FunFam" id="1.10.132.20:FF:000001">
    <property type="entry name" value="Ribosome-recycling factor"/>
    <property type="match status" value="1"/>
</dbReference>
<dbReference type="FunFam" id="3.30.1360.40:FF:000001">
    <property type="entry name" value="Ribosome-recycling factor"/>
    <property type="match status" value="1"/>
</dbReference>
<dbReference type="Gene3D" id="3.30.1360.40">
    <property type="match status" value="1"/>
</dbReference>
<dbReference type="Gene3D" id="1.10.132.20">
    <property type="entry name" value="Ribosome-recycling factor"/>
    <property type="match status" value="1"/>
</dbReference>
<dbReference type="HAMAP" id="MF_00040">
    <property type="entry name" value="RRF"/>
    <property type="match status" value="1"/>
</dbReference>
<dbReference type="InterPro" id="IPR002661">
    <property type="entry name" value="Ribosome_recyc_fac"/>
</dbReference>
<dbReference type="InterPro" id="IPR023584">
    <property type="entry name" value="Ribosome_recyc_fac_dom"/>
</dbReference>
<dbReference type="InterPro" id="IPR036191">
    <property type="entry name" value="RRF_sf"/>
</dbReference>
<dbReference type="NCBIfam" id="TIGR00496">
    <property type="entry name" value="frr"/>
    <property type="match status" value="1"/>
</dbReference>
<dbReference type="PANTHER" id="PTHR20982:SF3">
    <property type="entry name" value="MITOCHONDRIAL RIBOSOME RECYCLING FACTOR PSEUDO 1"/>
    <property type="match status" value="1"/>
</dbReference>
<dbReference type="PANTHER" id="PTHR20982">
    <property type="entry name" value="RIBOSOME RECYCLING FACTOR"/>
    <property type="match status" value="1"/>
</dbReference>
<dbReference type="Pfam" id="PF01765">
    <property type="entry name" value="RRF"/>
    <property type="match status" value="1"/>
</dbReference>
<dbReference type="SUPFAM" id="SSF55194">
    <property type="entry name" value="Ribosome recycling factor, RRF"/>
    <property type="match status" value="1"/>
</dbReference>
<feature type="chain" id="PRO_1000090771" description="Ribosome-recycling factor">
    <location>
        <begin position="1"/>
        <end position="185"/>
    </location>
</feature>
<comment type="function">
    <text evidence="1">Responsible for the release of ribosomes from messenger RNA at the termination of protein biosynthesis. May increase the efficiency of translation by recycling ribosomes from one round of translation to another.</text>
</comment>
<comment type="subcellular location">
    <subcellularLocation>
        <location evidence="1">Cytoplasm</location>
    </subcellularLocation>
</comment>
<comment type="similarity">
    <text evidence="1">Belongs to the RRF family.</text>
</comment>